<evidence type="ECO:0000255" key="1">
    <source>
        <dbReference type="PROSITE-ProRule" id="PRU00625"/>
    </source>
</evidence>
<evidence type="ECO:0000269" key="2">
    <source>
    </source>
</evidence>
<evidence type="ECO:0000269" key="3">
    <source>
    </source>
</evidence>
<evidence type="ECO:0000269" key="4">
    <source>
    </source>
</evidence>
<evidence type="ECO:0000303" key="5">
    <source>
    </source>
</evidence>
<evidence type="ECO:0000303" key="6">
    <source>
    </source>
</evidence>
<evidence type="ECO:0000305" key="7"/>
<evidence type="ECO:0000312" key="8">
    <source>
        <dbReference type="Araport" id="AT3G28470"/>
    </source>
</evidence>
<evidence type="ECO:0000312" key="9">
    <source>
        <dbReference type="EMBL" id="BAB02863.1"/>
    </source>
</evidence>
<evidence type="ECO:0000312" key="10">
    <source>
        <dbReference type="Proteomes" id="UP000006548"/>
    </source>
</evidence>
<comment type="function">
    <text evidence="3 4">Required for anther development and early tapetal function during microspore maturation (PubMed:18397379, PubMed:21957980). Regulates callose dissolution required for microspores release from the tetrads (PubMed:18397379).</text>
</comment>
<comment type="interaction">
    <interactant intactId="EBI-25523050">
        <id>Q9LSI7</id>
    </interactant>
    <interactant intactId="EBI-4424669">
        <id>Q9SYG2</id>
        <label>ASIL1</label>
    </interactant>
    <organismsDiffer>false</organismsDiffer>
    <experiments>3</experiments>
</comment>
<comment type="interaction">
    <interactant intactId="EBI-25523050">
        <id>Q9LSI7</id>
    </interactant>
    <interactant intactId="EBI-1571089">
        <id>O80450</id>
        <label>GT-3B</label>
    </interactant>
    <organismsDiffer>false</organismsDiffer>
    <experiments>3</experiments>
</comment>
<comment type="subcellular location">
    <subcellularLocation>
        <location evidence="1 3">Nucleus</location>
    </subcellularLocation>
</comment>
<comment type="tissue specificity">
    <text evidence="2 3">Inflorescences-specific (PubMed:18397379). Accumulates in anthers, especially in tapetum and meiocytes/microsporocytes and microspores during anther development (PubMed:17666023, PubMed:18397379).</text>
</comment>
<comment type="developmental stage">
    <text evidence="3 4">During anther development, first confined to meiocytes, tapetal and middle layer cells. At the microspore stage, mainly expressed in the tapetum and microspores. Later observed in developing pollen grains.</text>
</comment>
<comment type="disruption phenotype">
    <text evidence="3 4">Male-sterile mutant, defective in tapetal development, characterized by irregular and excessive division, redundant cells and leading to dysfunction of the tapetum (PubMed:18397379, PubMed:21957980). Impaired callose dissolution resulting in altered microspores release from the tetrads and no pollen production (PubMed:18397379).</text>
</comment>
<comment type="sequence caution" evidence="7">
    <conflict type="frameshift">
        <sequence resource="EMBL-CDS" id="AAC83599"/>
    </conflict>
</comment>
<comment type="sequence caution" evidence="7">
    <conflict type="erroneous termination">
        <sequence resource="EMBL-CDS" id="ABK28578"/>
    </conflict>
    <text>Extended C-terminus.</text>
</comment>
<gene>
    <name evidence="6" type="primary">MYB35</name>
    <name evidence="5" type="synonym">TDF1</name>
    <name evidence="8" type="ordered locus">At3g28470</name>
    <name evidence="9" type="ORF">MFJ20.16</name>
</gene>
<feature type="chain" id="PRO_0000433487" description="Transcription factor MYB35">
    <location>
        <begin position="1"/>
        <end position="317"/>
    </location>
</feature>
<feature type="domain" description="HTH myb-type 1" evidence="1">
    <location>
        <begin position="9"/>
        <end position="65"/>
    </location>
</feature>
<feature type="domain" description="HTH myb-type 2" evidence="1">
    <location>
        <begin position="66"/>
        <end position="116"/>
    </location>
</feature>
<feature type="DNA-binding region" description="H-T-H motif" evidence="1">
    <location>
        <begin position="37"/>
        <end position="61"/>
    </location>
</feature>
<feature type="DNA-binding region" description="H-T-H motif" evidence="1">
    <location>
        <begin position="89"/>
        <end position="112"/>
    </location>
</feature>
<feature type="sequence conflict" description="In Ref. 5; AAC83599." evidence="7" ref="5">
    <original>T</original>
    <variation>A</variation>
    <location>
        <position position="234"/>
    </location>
</feature>
<reference key="1">
    <citation type="journal article" date="2000" name="DNA Res.">
        <title>Structural analysis of Arabidopsis thaliana chromosome 3. I. Sequence features of the regions of 4,504,864 bp covered by sixty P1 and TAC clones.</title>
        <authorList>
            <person name="Sato S."/>
            <person name="Nakamura Y."/>
            <person name="Kaneko T."/>
            <person name="Katoh T."/>
            <person name="Asamizu E."/>
            <person name="Tabata S."/>
        </authorList>
    </citation>
    <scope>NUCLEOTIDE SEQUENCE [LARGE SCALE GENOMIC DNA]</scope>
    <source>
        <strain>cv. Columbia</strain>
    </source>
</reference>
<reference key="2">
    <citation type="journal article" date="2017" name="Plant J.">
        <title>Araport11: a complete reannotation of the Arabidopsis thaliana reference genome.</title>
        <authorList>
            <person name="Cheng C.Y."/>
            <person name="Krishnakumar V."/>
            <person name="Chan A.P."/>
            <person name="Thibaud-Nissen F."/>
            <person name="Schobel S."/>
            <person name="Town C.D."/>
        </authorList>
    </citation>
    <scope>GENOME REANNOTATION</scope>
    <source>
        <strain>cv. Columbia</strain>
    </source>
</reference>
<reference key="3">
    <citation type="journal article" date="2006" name="Plant Biotechnol. J.">
        <title>Simultaneous high-throughput recombinational cloning of open reading frames in closed and open configurations.</title>
        <authorList>
            <person name="Underwood B.A."/>
            <person name="Vanderhaeghen R."/>
            <person name="Whitford R."/>
            <person name="Town C.D."/>
            <person name="Hilson P."/>
        </authorList>
    </citation>
    <scope>NUCLEOTIDE SEQUENCE [LARGE SCALE MRNA]</scope>
    <source>
        <strain>cv. Columbia</strain>
    </source>
</reference>
<reference key="4">
    <citation type="journal article" date="2006" name="Plant Mol. Biol.">
        <title>The MYB transcription factor superfamily of Arabidopsis: expression analysis and phylogenetic comparison with the rice MYB family.</title>
        <authorList>
            <person name="Chen Y."/>
            <person name="Yang X."/>
            <person name="He K."/>
            <person name="Liu M."/>
            <person name="Li J."/>
            <person name="Gao Z."/>
            <person name="Lin Z."/>
            <person name="Zhang Y."/>
            <person name="Wang X."/>
            <person name="Qiu X."/>
            <person name="Shen Y."/>
            <person name="Zhang L."/>
            <person name="Deng X."/>
            <person name="Luo J."/>
            <person name="Deng X.-W."/>
            <person name="Chen Z."/>
            <person name="Gu H."/>
            <person name="Qu L.-J."/>
        </authorList>
    </citation>
    <scope>NUCLEOTIDE SEQUENCE [LARGE SCALE MRNA]</scope>
    <scope>GENE FAMILY</scope>
</reference>
<reference key="5">
    <citation type="journal article" date="1998" name="Plant J.">
        <title>Towards functional characterisation of the members of the R2R3-MYB gene family from Arabidopsis thaliana.</title>
        <authorList>
            <person name="Kranz H.D."/>
            <person name="Denekamp M."/>
            <person name="Greco R."/>
            <person name="Jin H.-L."/>
            <person name="Leyva A."/>
            <person name="Meissner R.C."/>
            <person name="Petroni K."/>
            <person name="Urzainqui A."/>
            <person name="Bevan M."/>
            <person name="Martin C."/>
            <person name="Smeekens S."/>
            <person name="Tonelli C."/>
            <person name="Paz-Ares J."/>
            <person name="Weisshaar B."/>
        </authorList>
    </citation>
    <scope>NUCLEOTIDE SEQUENCE [LARGE SCALE MRNA] OF 54-290</scope>
    <scope>GENE FAMILY</scope>
    <scope>NOMENCLATURE</scope>
    <source>
        <strain>cv. Columbia</strain>
    </source>
</reference>
<reference key="6">
    <citation type="journal article" date="2001" name="Curr. Opin. Plant Biol.">
        <title>The R2R3-MYB gene family in Arabidopsis thaliana.</title>
        <authorList>
            <person name="Stracke R."/>
            <person name="Werber M."/>
            <person name="Weisshaar B."/>
        </authorList>
    </citation>
    <scope>GENE FAMILY</scope>
</reference>
<reference key="7">
    <citation type="journal article" date="2007" name="Plant J.">
        <title>Differential gene expression in Arabidopsis wild-type and mutant anthers: insights into anther cell differentiation and regulatory networks.</title>
        <authorList>
            <person name="Wijeratne A.J."/>
            <person name="Zhang W."/>
            <person name="Sun Y."/>
            <person name="Liu W."/>
            <person name="Albert R."/>
            <person name="Zheng Z."/>
            <person name="Oppenheimer D.G."/>
            <person name="Zhao D."/>
            <person name="Ma H."/>
        </authorList>
    </citation>
    <scope>TISSUE SPECIFICITY</scope>
</reference>
<reference key="8">
    <citation type="journal article" date="2008" name="Plant J.">
        <title>Defective in Tapetal development and function 1 is essential for anther development and tapetal function for microspore maturation in Arabidopsis.</title>
        <authorList>
            <person name="Zhu J."/>
            <person name="Chen H."/>
            <person name="Li H."/>
            <person name="Gao J.F."/>
            <person name="Jiang H."/>
            <person name="Wang C."/>
            <person name="Guan Y.F."/>
            <person name="Yang Z.N."/>
        </authorList>
    </citation>
    <scope>FUNCTION</scope>
    <scope>DISRUPTION PHENOTYPE</scope>
    <scope>TISSUE SPECIFICITY</scope>
    <scope>DEVELOPMENTAL STAGE</scope>
    <scope>SUBCELLULAR LOCATION</scope>
    <source>
        <strain>cv. Landsberg erecta</strain>
    </source>
</reference>
<reference key="9">
    <citation type="journal article" date="2011" name="J. Integr. Plant Biol.">
        <title>A genetic pathway for tapetum development and function in Arabidopsis.</title>
        <authorList>
            <person name="Zhu J."/>
            <person name="Lou Y."/>
            <person name="Xu X."/>
            <person name="Yang Z.N."/>
        </authorList>
    </citation>
    <scope>FUNCTION</scope>
    <scope>DISRUPTION PHENOTYPE</scope>
    <scope>DEVELOPMENTAL STAGE</scope>
    <source>
        <strain>cv. Landsberg erecta</strain>
    </source>
</reference>
<sequence>MGRPPCCDKSNVKKGLWTEEEDAKILAYVAIHGVGNWSLIPKKAGLNRCGKSCRLRWTNYLRPDLKHDSFSTQEEELIIECHRAIGSRWSSIARKLPGRTDNDVKNHWNTKLKKKLMKMGIDPVTHKPVSQLLAEFRNISGHGNASFKTEPSNNSILTQSNSAWEMMRNTTTNHESYYTNSPMMFTNSSEYQTTPFHFYSHPNHLLNGTTSSCSSSSSSTSITQPNQVPQTPVTNFYWSDFLLSDPVPQVVGSSATSDLTFTQNEHHFNIEAEYISQNIDSKASGTCHSASSFVDEILDKDQEMLSQFPQLLNDFDY</sequence>
<organism evidence="10">
    <name type="scientific">Arabidopsis thaliana</name>
    <name type="common">Mouse-ear cress</name>
    <dbReference type="NCBI Taxonomy" id="3702"/>
    <lineage>
        <taxon>Eukaryota</taxon>
        <taxon>Viridiplantae</taxon>
        <taxon>Streptophyta</taxon>
        <taxon>Embryophyta</taxon>
        <taxon>Tracheophyta</taxon>
        <taxon>Spermatophyta</taxon>
        <taxon>Magnoliopsida</taxon>
        <taxon>eudicotyledons</taxon>
        <taxon>Gunneridae</taxon>
        <taxon>Pentapetalae</taxon>
        <taxon>rosids</taxon>
        <taxon>malvids</taxon>
        <taxon>Brassicales</taxon>
        <taxon>Brassicaceae</taxon>
        <taxon>Camelineae</taxon>
        <taxon>Arabidopsis</taxon>
    </lineage>
</organism>
<accession>Q9LSI7</accession>
<accession>A0MEZ1</accession>
<accession>O49770</accession>
<protein>
    <recommendedName>
        <fullName evidence="6">Transcription factor MYB35</fullName>
    </recommendedName>
    <alternativeName>
        <fullName evidence="6">Myb-related protein 35</fullName>
        <shortName evidence="6">AtMYB35</shortName>
    </alternativeName>
    <alternativeName>
        <fullName evidence="5">Protein DEFECTIVE IN TAPETAL DEVELOPMENT AND FUNCTION 1</fullName>
    </alternativeName>
</protein>
<proteinExistence type="evidence at protein level"/>
<name>MYB35_ARATH</name>
<keyword id="KW-0217">Developmental protein</keyword>
<keyword id="KW-0238">DNA-binding</keyword>
<keyword id="KW-0539">Nucleus</keyword>
<keyword id="KW-1185">Reference proteome</keyword>
<keyword id="KW-0677">Repeat</keyword>
<keyword id="KW-0804">Transcription</keyword>
<keyword id="KW-0805">Transcription regulation</keyword>
<dbReference type="EMBL" id="AB026644">
    <property type="protein sequence ID" value="BAB02863.1"/>
    <property type="molecule type" value="Genomic_DNA"/>
</dbReference>
<dbReference type="EMBL" id="CP002686">
    <property type="protein sequence ID" value="AEE77449.1"/>
    <property type="molecule type" value="Genomic_DNA"/>
</dbReference>
<dbReference type="EMBL" id="DQ446711">
    <property type="protein sequence ID" value="ABE65977.1"/>
    <property type="molecule type" value="mRNA"/>
</dbReference>
<dbReference type="EMBL" id="DQ653114">
    <property type="protein sequence ID" value="ABK28578.1"/>
    <property type="status" value="ALT_SEQ"/>
    <property type="molecule type" value="mRNA"/>
</dbReference>
<dbReference type="EMBL" id="AY519591">
    <property type="protein sequence ID" value="AAS10061.1"/>
    <property type="molecule type" value="mRNA"/>
</dbReference>
<dbReference type="EMBL" id="AF062877">
    <property type="protein sequence ID" value="AAC83599.1"/>
    <property type="status" value="ALT_FRAME"/>
    <property type="molecule type" value="mRNA"/>
</dbReference>
<dbReference type="PIR" id="T51649">
    <property type="entry name" value="T51649"/>
</dbReference>
<dbReference type="RefSeq" id="NP_189488.1">
    <property type="nucleotide sequence ID" value="NM_113767.2"/>
</dbReference>
<dbReference type="SMR" id="Q9LSI7"/>
<dbReference type="IntAct" id="Q9LSI7">
    <property type="interactions" value="2"/>
</dbReference>
<dbReference type="STRING" id="3702.Q9LSI7"/>
<dbReference type="PaxDb" id="3702-AT3G28470.1"/>
<dbReference type="EnsemblPlants" id="AT3G28470.1">
    <property type="protein sequence ID" value="AT3G28470.1"/>
    <property type="gene ID" value="AT3G28470"/>
</dbReference>
<dbReference type="GeneID" id="822477"/>
<dbReference type="Gramene" id="AT3G28470.1">
    <property type="protein sequence ID" value="AT3G28470.1"/>
    <property type="gene ID" value="AT3G28470"/>
</dbReference>
<dbReference type="KEGG" id="ath:AT3G28470"/>
<dbReference type="Araport" id="AT3G28470"/>
<dbReference type="TAIR" id="AT3G28470">
    <property type="gene designation" value="TDF1"/>
</dbReference>
<dbReference type="eggNOG" id="KOG0048">
    <property type="taxonomic scope" value="Eukaryota"/>
</dbReference>
<dbReference type="HOGENOM" id="CLU_028567_15_2_1"/>
<dbReference type="InParanoid" id="Q9LSI7"/>
<dbReference type="OMA" id="VANHGTG"/>
<dbReference type="PhylomeDB" id="Q9LSI7"/>
<dbReference type="PRO" id="PR:Q9LSI7"/>
<dbReference type="Proteomes" id="UP000006548">
    <property type="component" value="Chromosome 3"/>
</dbReference>
<dbReference type="ExpressionAtlas" id="Q9LSI7">
    <property type="expression patterns" value="baseline and differential"/>
</dbReference>
<dbReference type="GO" id="GO:0005634">
    <property type="term" value="C:nucleus"/>
    <property type="evidence" value="ECO:0000314"/>
    <property type="project" value="TAIR"/>
</dbReference>
<dbReference type="GO" id="GO:0003677">
    <property type="term" value="F:DNA binding"/>
    <property type="evidence" value="ECO:0007669"/>
    <property type="project" value="UniProtKB-KW"/>
</dbReference>
<dbReference type="GO" id="GO:0003700">
    <property type="term" value="F:DNA-binding transcription factor activity"/>
    <property type="evidence" value="ECO:0000250"/>
    <property type="project" value="TAIR"/>
</dbReference>
<dbReference type="GO" id="GO:0048658">
    <property type="term" value="P:anther wall tapetum development"/>
    <property type="evidence" value="ECO:0000315"/>
    <property type="project" value="UniProtKB"/>
</dbReference>
<dbReference type="GO" id="GO:0052545">
    <property type="term" value="P:callose localization"/>
    <property type="evidence" value="ECO:0000315"/>
    <property type="project" value="UniProtKB"/>
</dbReference>
<dbReference type="GO" id="GO:0055046">
    <property type="term" value="P:microgametogenesis"/>
    <property type="evidence" value="ECO:0000315"/>
    <property type="project" value="UniProtKB"/>
</dbReference>
<dbReference type="CDD" id="cd00167">
    <property type="entry name" value="SANT"/>
    <property type="match status" value="2"/>
</dbReference>
<dbReference type="FunFam" id="1.10.10.60:FF:000204">
    <property type="entry name" value="transcription factor MYB80"/>
    <property type="match status" value="1"/>
</dbReference>
<dbReference type="FunFam" id="1.10.10.60:FF:000015">
    <property type="entry name" value="Transcription factor RAX3"/>
    <property type="match status" value="1"/>
</dbReference>
<dbReference type="Gene3D" id="1.10.10.60">
    <property type="entry name" value="Homeodomain-like"/>
    <property type="match status" value="2"/>
</dbReference>
<dbReference type="InterPro" id="IPR009057">
    <property type="entry name" value="Homeodomain-like_sf"/>
</dbReference>
<dbReference type="InterPro" id="IPR017930">
    <property type="entry name" value="Myb_dom"/>
</dbReference>
<dbReference type="InterPro" id="IPR015495">
    <property type="entry name" value="Myb_TF_plants"/>
</dbReference>
<dbReference type="InterPro" id="IPR001005">
    <property type="entry name" value="SANT/Myb"/>
</dbReference>
<dbReference type="PANTHER" id="PTHR47994">
    <property type="entry name" value="F14D16.11-RELATED"/>
    <property type="match status" value="1"/>
</dbReference>
<dbReference type="PANTHER" id="PTHR47994:SF5">
    <property type="entry name" value="F14D16.11-RELATED"/>
    <property type="match status" value="1"/>
</dbReference>
<dbReference type="Pfam" id="PF00249">
    <property type="entry name" value="Myb_DNA-binding"/>
    <property type="match status" value="2"/>
</dbReference>
<dbReference type="SMART" id="SM00717">
    <property type="entry name" value="SANT"/>
    <property type="match status" value="2"/>
</dbReference>
<dbReference type="SUPFAM" id="SSF46689">
    <property type="entry name" value="Homeodomain-like"/>
    <property type="match status" value="1"/>
</dbReference>
<dbReference type="PROSITE" id="PS51294">
    <property type="entry name" value="HTH_MYB"/>
    <property type="match status" value="2"/>
</dbReference>